<name>RL14_ALKOO</name>
<organism>
    <name type="scientific">Alkaliphilus oremlandii (strain OhILAs)</name>
    <name type="common">Clostridium oremlandii (strain OhILAs)</name>
    <dbReference type="NCBI Taxonomy" id="350688"/>
    <lineage>
        <taxon>Bacteria</taxon>
        <taxon>Bacillati</taxon>
        <taxon>Bacillota</taxon>
        <taxon>Clostridia</taxon>
        <taxon>Peptostreptococcales</taxon>
        <taxon>Natronincolaceae</taxon>
        <taxon>Alkaliphilus</taxon>
    </lineage>
</organism>
<reference key="1">
    <citation type="submission" date="2007-10" db="EMBL/GenBank/DDBJ databases">
        <title>Complete genome of Alkaliphilus oremlandii OhILAs.</title>
        <authorList>
            <person name="Copeland A."/>
            <person name="Lucas S."/>
            <person name="Lapidus A."/>
            <person name="Barry K."/>
            <person name="Detter J.C."/>
            <person name="Glavina del Rio T."/>
            <person name="Hammon N."/>
            <person name="Israni S."/>
            <person name="Dalin E."/>
            <person name="Tice H."/>
            <person name="Pitluck S."/>
            <person name="Chain P."/>
            <person name="Malfatti S."/>
            <person name="Shin M."/>
            <person name="Vergez L."/>
            <person name="Schmutz J."/>
            <person name="Larimer F."/>
            <person name="Land M."/>
            <person name="Hauser L."/>
            <person name="Kyrpides N."/>
            <person name="Mikhailova N."/>
            <person name="Stolz J.F."/>
            <person name="Dawson A."/>
            <person name="Fisher E."/>
            <person name="Crable B."/>
            <person name="Perera E."/>
            <person name="Lisak J."/>
            <person name="Ranganathan M."/>
            <person name="Basu P."/>
            <person name="Richardson P."/>
        </authorList>
    </citation>
    <scope>NUCLEOTIDE SEQUENCE [LARGE SCALE GENOMIC DNA]</scope>
    <source>
        <strain>OhILAs</strain>
    </source>
</reference>
<evidence type="ECO:0000255" key="1">
    <source>
        <dbReference type="HAMAP-Rule" id="MF_01367"/>
    </source>
</evidence>
<evidence type="ECO:0000305" key="2"/>
<gene>
    <name evidence="1" type="primary">rplN</name>
    <name type="ordered locus">Clos_0502</name>
</gene>
<keyword id="KW-1185">Reference proteome</keyword>
<keyword id="KW-0687">Ribonucleoprotein</keyword>
<keyword id="KW-0689">Ribosomal protein</keyword>
<keyword id="KW-0694">RNA-binding</keyword>
<keyword id="KW-0699">rRNA-binding</keyword>
<comment type="function">
    <text evidence="1">Binds to 23S rRNA. Forms part of two intersubunit bridges in the 70S ribosome.</text>
</comment>
<comment type="subunit">
    <text evidence="1">Part of the 50S ribosomal subunit. Forms a cluster with proteins L3 and L19. In the 70S ribosome, L14 and L19 interact and together make contacts with the 16S rRNA in bridges B5 and B8.</text>
</comment>
<comment type="similarity">
    <text evidence="1">Belongs to the universal ribosomal protein uL14 family.</text>
</comment>
<accession>A8MLF0</accession>
<sequence>MIQQESRLKVADNSGAKELLCIRVLGGTRRKYAHIGDVIVCSVKSATPGGVVKKGQVVKAVVVRTTNTTRRKDGSYIKFDENAAVIIKDDKQPTGTRIFGPVARELRDKNFMKIVSLAPEVL</sequence>
<protein>
    <recommendedName>
        <fullName evidence="1">Large ribosomal subunit protein uL14</fullName>
    </recommendedName>
    <alternativeName>
        <fullName evidence="2">50S ribosomal protein L14</fullName>
    </alternativeName>
</protein>
<proteinExistence type="inferred from homology"/>
<dbReference type="EMBL" id="CP000853">
    <property type="protein sequence ID" value="ABW18064.1"/>
    <property type="molecule type" value="Genomic_DNA"/>
</dbReference>
<dbReference type="RefSeq" id="WP_012158378.1">
    <property type="nucleotide sequence ID" value="NC_009922.1"/>
</dbReference>
<dbReference type="SMR" id="A8MLF0"/>
<dbReference type="STRING" id="350688.Clos_0502"/>
<dbReference type="KEGG" id="aoe:Clos_0502"/>
<dbReference type="eggNOG" id="COG0093">
    <property type="taxonomic scope" value="Bacteria"/>
</dbReference>
<dbReference type="HOGENOM" id="CLU_095071_2_1_9"/>
<dbReference type="OrthoDB" id="9806379at2"/>
<dbReference type="Proteomes" id="UP000000269">
    <property type="component" value="Chromosome"/>
</dbReference>
<dbReference type="GO" id="GO:0022625">
    <property type="term" value="C:cytosolic large ribosomal subunit"/>
    <property type="evidence" value="ECO:0007669"/>
    <property type="project" value="TreeGrafter"/>
</dbReference>
<dbReference type="GO" id="GO:0070180">
    <property type="term" value="F:large ribosomal subunit rRNA binding"/>
    <property type="evidence" value="ECO:0007669"/>
    <property type="project" value="TreeGrafter"/>
</dbReference>
<dbReference type="GO" id="GO:0003735">
    <property type="term" value="F:structural constituent of ribosome"/>
    <property type="evidence" value="ECO:0007669"/>
    <property type="project" value="InterPro"/>
</dbReference>
<dbReference type="GO" id="GO:0006412">
    <property type="term" value="P:translation"/>
    <property type="evidence" value="ECO:0007669"/>
    <property type="project" value="UniProtKB-UniRule"/>
</dbReference>
<dbReference type="CDD" id="cd00337">
    <property type="entry name" value="Ribosomal_uL14"/>
    <property type="match status" value="1"/>
</dbReference>
<dbReference type="FunFam" id="2.40.150.20:FF:000001">
    <property type="entry name" value="50S ribosomal protein L14"/>
    <property type="match status" value="1"/>
</dbReference>
<dbReference type="Gene3D" id="2.40.150.20">
    <property type="entry name" value="Ribosomal protein L14"/>
    <property type="match status" value="1"/>
</dbReference>
<dbReference type="HAMAP" id="MF_01367">
    <property type="entry name" value="Ribosomal_uL14"/>
    <property type="match status" value="1"/>
</dbReference>
<dbReference type="InterPro" id="IPR000218">
    <property type="entry name" value="Ribosomal_uL14"/>
</dbReference>
<dbReference type="InterPro" id="IPR005745">
    <property type="entry name" value="Ribosomal_uL14_bac-type"/>
</dbReference>
<dbReference type="InterPro" id="IPR019972">
    <property type="entry name" value="Ribosomal_uL14_CS"/>
</dbReference>
<dbReference type="InterPro" id="IPR036853">
    <property type="entry name" value="Ribosomal_uL14_sf"/>
</dbReference>
<dbReference type="NCBIfam" id="TIGR01067">
    <property type="entry name" value="rplN_bact"/>
    <property type="match status" value="1"/>
</dbReference>
<dbReference type="PANTHER" id="PTHR11761">
    <property type="entry name" value="50S/60S RIBOSOMAL PROTEIN L14/L23"/>
    <property type="match status" value="1"/>
</dbReference>
<dbReference type="PANTHER" id="PTHR11761:SF3">
    <property type="entry name" value="LARGE RIBOSOMAL SUBUNIT PROTEIN UL14M"/>
    <property type="match status" value="1"/>
</dbReference>
<dbReference type="Pfam" id="PF00238">
    <property type="entry name" value="Ribosomal_L14"/>
    <property type="match status" value="1"/>
</dbReference>
<dbReference type="SMART" id="SM01374">
    <property type="entry name" value="Ribosomal_L14"/>
    <property type="match status" value="1"/>
</dbReference>
<dbReference type="SUPFAM" id="SSF50193">
    <property type="entry name" value="Ribosomal protein L14"/>
    <property type="match status" value="1"/>
</dbReference>
<dbReference type="PROSITE" id="PS00049">
    <property type="entry name" value="RIBOSOMAL_L14"/>
    <property type="match status" value="1"/>
</dbReference>
<feature type="chain" id="PRO_1000068002" description="Large ribosomal subunit protein uL14">
    <location>
        <begin position="1"/>
        <end position="122"/>
    </location>
</feature>